<proteinExistence type="inferred from homology"/>
<evidence type="ECO:0000255" key="1">
    <source>
        <dbReference type="HAMAP-Rule" id="MF_01342"/>
    </source>
</evidence>
<evidence type="ECO:0000256" key="2">
    <source>
        <dbReference type="SAM" id="MobiDB-lite"/>
    </source>
</evidence>
<evidence type="ECO:0000305" key="3"/>
<reference key="1">
    <citation type="journal article" date="2006" name="Science">
        <title>Genomic islands and the ecology and evolution of Prochlorococcus.</title>
        <authorList>
            <person name="Coleman M.L."/>
            <person name="Sullivan M.B."/>
            <person name="Martiny A.C."/>
            <person name="Steglich C."/>
            <person name="Barry K."/>
            <person name="Delong E.F."/>
            <person name="Chisholm S.W."/>
        </authorList>
    </citation>
    <scope>NUCLEOTIDE SEQUENCE [LARGE SCALE GENOMIC DNA]</scope>
    <source>
        <strain>MIT 9312</strain>
    </source>
</reference>
<accession>Q318J1</accession>
<name>RL16_PROM9</name>
<feature type="chain" id="PRO_0000251654" description="Large ribosomal subunit protein uL16">
    <location>
        <begin position="1"/>
        <end position="160"/>
    </location>
</feature>
<feature type="region of interest" description="Disordered" evidence="2">
    <location>
        <begin position="138"/>
        <end position="160"/>
    </location>
</feature>
<feature type="compositionally biased region" description="Polar residues" evidence="2">
    <location>
        <begin position="138"/>
        <end position="148"/>
    </location>
</feature>
<feature type="compositionally biased region" description="Basic and acidic residues" evidence="2">
    <location>
        <begin position="149"/>
        <end position="160"/>
    </location>
</feature>
<gene>
    <name evidence="1" type="primary">rplP</name>
    <name evidence="1" type="synonym">rpl16</name>
    <name type="ordered locus">PMT9312_1643</name>
</gene>
<dbReference type="EMBL" id="CP000111">
    <property type="protein sequence ID" value="ABB50704.1"/>
    <property type="molecule type" value="Genomic_DNA"/>
</dbReference>
<dbReference type="RefSeq" id="WP_011377185.1">
    <property type="nucleotide sequence ID" value="NC_007577.1"/>
</dbReference>
<dbReference type="SMR" id="Q318J1"/>
<dbReference type="STRING" id="74546.PMT9312_1643"/>
<dbReference type="KEGG" id="pmi:PMT9312_1643"/>
<dbReference type="eggNOG" id="COG0197">
    <property type="taxonomic scope" value="Bacteria"/>
</dbReference>
<dbReference type="HOGENOM" id="CLU_078858_2_1_3"/>
<dbReference type="OrthoDB" id="9802589at2"/>
<dbReference type="Proteomes" id="UP000002715">
    <property type="component" value="Chromosome"/>
</dbReference>
<dbReference type="GO" id="GO:1990904">
    <property type="term" value="C:ribonucleoprotein complex"/>
    <property type="evidence" value="ECO:0007669"/>
    <property type="project" value="UniProtKB-KW"/>
</dbReference>
<dbReference type="GO" id="GO:0005840">
    <property type="term" value="C:ribosome"/>
    <property type="evidence" value="ECO:0007669"/>
    <property type="project" value="UniProtKB-KW"/>
</dbReference>
<dbReference type="GO" id="GO:0019843">
    <property type="term" value="F:rRNA binding"/>
    <property type="evidence" value="ECO:0007669"/>
    <property type="project" value="UniProtKB-UniRule"/>
</dbReference>
<dbReference type="GO" id="GO:0003735">
    <property type="term" value="F:structural constituent of ribosome"/>
    <property type="evidence" value="ECO:0007669"/>
    <property type="project" value="InterPro"/>
</dbReference>
<dbReference type="GO" id="GO:0000049">
    <property type="term" value="F:tRNA binding"/>
    <property type="evidence" value="ECO:0007669"/>
    <property type="project" value="UniProtKB-KW"/>
</dbReference>
<dbReference type="GO" id="GO:0006412">
    <property type="term" value="P:translation"/>
    <property type="evidence" value="ECO:0007669"/>
    <property type="project" value="UniProtKB-UniRule"/>
</dbReference>
<dbReference type="CDD" id="cd01433">
    <property type="entry name" value="Ribosomal_L16_L10e"/>
    <property type="match status" value="1"/>
</dbReference>
<dbReference type="FunFam" id="3.90.1170.10:FF:000001">
    <property type="entry name" value="50S ribosomal protein L16"/>
    <property type="match status" value="1"/>
</dbReference>
<dbReference type="Gene3D" id="3.90.1170.10">
    <property type="entry name" value="Ribosomal protein L10e/L16"/>
    <property type="match status" value="1"/>
</dbReference>
<dbReference type="HAMAP" id="MF_01342">
    <property type="entry name" value="Ribosomal_uL16"/>
    <property type="match status" value="1"/>
</dbReference>
<dbReference type="InterPro" id="IPR047873">
    <property type="entry name" value="Ribosomal_uL16"/>
</dbReference>
<dbReference type="InterPro" id="IPR000114">
    <property type="entry name" value="Ribosomal_uL16_bact-type"/>
</dbReference>
<dbReference type="InterPro" id="IPR020798">
    <property type="entry name" value="Ribosomal_uL16_CS"/>
</dbReference>
<dbReference type="InterPro" id="IPR016180">
    <property type="entry name" value="Ribosomal_uL16_dom"/>
</dbReference>
<dbReference type="InterPro" id="IPR036920">
    <property type="entry name" value="Ribosomal_uL16_sf"/>
</dbReference>
<dbReference type="NCBIfam" id="TIGR01164">
    <property type="entry name" value="rplP_bact"/>
    <property type="match status" value="1"/>
</dbReference>
<dbReference type="PANTHER" id="PTHR12220">
    <property type="entry name" value="50S/60S RIBOSOMAL PROTEIN L16"/>
    <property type="match status" value="1"/>
</dbReference>
<dbReference type="PANTHER" id="PTHR12220:SF13">
    <property type="entry name" value="LARGE RIBOSOMAL SUBUNIT PROTEIN UL16M"/>
    <property type="match status" value="1"/>
</dbReference>
<dbReference type="Pfam" id="PF00252">
    <property type="entry name" value="Ribosomal_L16"/>
    <property type="match status" value="1"/>
</dbReference>
<dbReference type="PRINTS" id="PR00060">
    <property type="entry name" value="RIBOSOMALL16"/>
</dbReference>
<dbReference type="SUPFAM" id="SSF54686">
    <property type="entry name" value="Ribosomal protein L16p/L10e"/>
    <property type="match status" value="1"/>
</dbReference>
<dbReference type="PROSITE" id="PS00586">
    <property type="entry name" value="RIBOSOMAL_L16_1"/>
    <property type="match status" value="1"/>
</dbReference>
<dbReference type="PROSITE" id="PS00701">
    <property type="entry name" value="RIBOSOMAL_L16_2"/>
    <property type="match status" value="1"/>
</dbReference>
<keyword id="KW-0687">Ribonucleoprotein</keyword>
<keyword id="KW-0689">Ribosomal protein</keyword>
<keyword id="KW-0694">RNA-binding</keyword>
<keyword id="KW-0699">rRNA-binding</keyword>
<keyword id="KW-0820">tRNA-binding</keyword>
<sequence length="160" mass="18247">MLSPKRTKFRKQHRGRMRGVASKGNTIAFGQFALQAQDCGWVTARQIEASRRAMTRYIKRGGQIWIRIFPDKPVTMRPAETRMGSGKGNPEFWVAVVKPGRILFEMGGDDITEEIAKEAMRLAQYKLPVKTKFISSDKNLEVSSQENTKNNKESQEEVKQ</sequence>
<comment type="function">
    <text evidence="1">Binds 23S rRNA and is also seen to make contacts with the A and possibly P site tRNAs.</text>
</comment>
<comment type="subunit">
    <text evidence="1">Part of the 50S ribosomal subunit.</text>
</comment>
<comment type="similarity">
    <text evidence="1">Belongs to the universal ribosomal protein uL16 family.</text>
</comment>
<protein>
    <recommendedName>
        <fullName evidence="1">Large ribosomal subunit protein uL16</fullName>
    </recommendedName>
    <alternativeName>
        <fullName evidence="3">50S ribosomal protein L16</fullName>
    </alternativeName>
</protein>
<organism>
    <name type="scientific">Prochlorococcus marinus (strain MIT 9312)</name>
    <dbReference type="NCBI Taxonomy" id="74546"/>
    <lineage>
        <taxon>Bacteria</taxon>
        <taxon>Bacillati</taxon>
        <taxon>Cyanobacteriota</taxon>
        <taxon>Cyanophyceae</taxon>
        <taxon>Synechococcales</taxon>
        <taxon>Prochlorococcaceae</taxon>
        <taxon>Prochlorococcus</taxon>
    </lineage>
</organism>